<reference key="1">
    <citation type="journal article" date="2005" name="Proc. Natl. Acad. Sci. U.S.A.">
        <title>Complete genome sequence of the probiotic lactic acid bacterium Lactobacillus acidophilus NCFM.</title>
        <authorList>
            <person name="Altermann E."/>
            <person name="Russell W.M."/>
            <person name="Azcarate-Peril M.A."/>
            <person name="Barrangou R."/>
            <person name="Buck B.L."/>
            <person name="McAuliffe O."/>
            <person name="Souther N."/>
            <person name="Dobson A."/>
            <person name="Duong T."/>
            <person name="Callanan M."/>
            <person name="Lick S."/>
            <person name="Hamrick A."/>
            <person name="Cano R."/>
            <person name="Klaenhammer T.R."/>
        </authorList>
    </citation>
    <scope>NUCLEOTIDE SEQUENCE [LARGE SCALE GENOMIC DNA]</scope>
    <source>
        <strain>ATCC 700396 / NCK56 / N2 / NCFM</strain>
    </source>
</reference>
<dbReference type="EC" id="2.7.1.39" evidence="1"/>
<dbReference type="EMBL" id="CP000033">
    <property type="protein sequence ID" value="AAV43047.1"/>
    <property type="molecule type" value="Genomic_DNA"/>
</dbReference>
<dbReference type="RefSeq" id="WP_003547723.1">
    <property type="nucleotide sequence ID" value="NC_006814.3"/>
</dbReference>
<dbReference type="RefSeq" id="YP_194078.1">
    <property type="nucleotide sequence ID" value="NC_006814.3"/>
</dbReference>
<dbReference type="SMR" id="Q5FJS7"/>
<dbReference type="STRING" id="272621.LBA1211"/>
<dbReference type="GeneID" id="93289694"/>
<dbReference type="KEGG" id="lac:LBA1211"/>
<dbReference type="PATRIC" id="fig|272621.13.peg.1149"/>
<dbReference type="eggNOG" id="COG0083">
    <property type="taxonomic scope" value="Bacteria"/>
</dbReference>
<dbReference type="HOGENOM" id="CLU_041243_0_0_9"/>
<dbReference type="OrthoDB" id="9769912at2"/>
<dbReference type="BioCyc" id="LACI272621:G1G49-1198-MONOMER"/>
<dbReference type="UniPathway" id="UPA00050">
    <property type="reaction ID" value="UER00064"/>
</dbReference>
<dbReference type="Proteomes" id="UP000006381">
    <property type="component" value="Chromosome"/>
</dbReference>
<dbReference type="GO" id="GO:0005737">
    <property type="term" value="C:cytoplasm"/>
    <property type="evidence" value="ECO:0007669"/>
    <property type="project" value="UniProtKB-SubCell"/>
</dbReference>
<dbReference type="GO" id="GO:0005524">
    <property type="term" value="F:ATP binding"/>
    <property type="evidence" value="ECO:0007669"/>
    <property type="project" value="UniProtKB-UniRule"/>
</dbReference>
<dbReference type="GO" id="GO:0004413">
    <property type="term" value="F:homoserine kinase activity"/>
    <property type="evidence" value="ECO:0007669"/>
    <property type="project" value="UniProtKB-UniRule"/>
</dbReference>
<dbReference type="GO" id="GO:0009088">
    <property type="term" value="P:threonine biosynthetic process"/>
    <property type="evidence" value="ECO:0007669"/>
    <property type="project" value="UniProtKB-UniRule"/>
</dbReference>
<dbReference type="Gene3D" id="3.30.230.10">
    <property type="match status" value="1"/>
</dbReference>
<dbReference type="Gene3D" id="3.30.70.890">
    <property type="entry name" value="GHMP kinase, C-terminal domain"/>
    <property type="match status" value="1"/>
</dbReference>
<dbReference type="HAMAP" id="MF_00384">
    <property type="entry name" value="Homoser_kinase"/>
    <property type="match status" value="1"/>
</dbReference>
<dbReference type="InterPro" id="IPR013750">
    <property type="entry name" value="GHMP_kinase_C_dom"/>
</dbReference>
<dbReference type="InterPro" id="IPR036554">
    <property type="entry name" value="GHMP_kinase_C_sf"/>
</dbReference>
<dbReference type="InterPro" id="IPR006204">
    <property type="entry name" value="GHMP_kinase_N_dom"/>
</dbReference>
<dbReference type="InterPro" id="IPR006203">
    <property type="entry name" value="GHMP_knse_ATP-bd_CS"/>
</dbReference>
<dbReference type="InterPro" id="IPR000870">
    <property type="entry name" value="Homoserine_kinase"/>
</dbReference>
<dbReference type="InterPro" id="IPR020568">
    <property type="entry name" value="Ribosomal_Su5_D2-typ_SF"/>
</dbReference>
<dbReference type="InterPro" id="IPR014721">
    <property type="entry name" value="Ribsml_uS5_D2-typ_fold_subgr"/>
</dbReference>
<dbReference type="NCBIfam" id="TIGR00191">
    <property type="entry name" value="thrB"/>
    <property type="match status" value="1"/>
</dbReference>
<dbReference type="PANTHER" id="PTHR20861:SF1">
    <property type="entry name" value="HOMOSERINE KINASE"/>
    <property type="match status" value="1"/>
</dbReference>
<dbReference type="PANTHER" id="PTHR20861">
    <property type="entry name" value="HOMOSERINE/4-DIPHOSPHOCYTIDYL-2-C-METHYL-D-ERYTHRITOL KINASE"/>
    <property type="match status" value="1"/>
</dbReference>
<dbReference type="Pfam" id="PF08544">
    <property type="entry name" value="GHMP_kinases_C"/>
    <property type="match status" value="1"/>
</dbReference>
<dbReference type="Pfam" id="PF00288">
    <property type="entry name" value="GHMP_kinases_N"/>
    <property type="match status" value="1"/>
</dbReference>
<dbReference type="PIRSF" id="PIRSF000676">
    <property type="entry name" value="Homoser_kin"/>
    <property type="match status" value="1"/>
</dbReference>
<dbReference type="PRINTS" id="PR00958">
    <property type="entry name" value="HOMSERKINASE"/>
</dbReference>
<dbReference type="SUPFAM" id="SSF55060">
    <property type="entry name" value="GHMP Kinase, C-terminal domain"/>
    <property type="match status" value="1"/>
</dbReference>
<dbReference type="SUPFAM" id="SSF54211">
    <property type="entry name" value="Ribosomal protein S5 domain 2-like"/>
    <property type="match status" value="1"/>
</dbReference>
<dbReference type="PROSITE" id="PS00627">
    <property type="entry name" value="GHMP_KINASES_ATP"/>
    <property type="match status" value="1"/>
</dbReference>
<sequence>MIIKVPASTANLGPGFDSIGMAVSLYLEVEVLSVSDRFQVDHVIPKIPHDETNLIVKTALTVYPGLQPLHLRVKNDIPLAHGLGSSSSAIAAGIELADHFGKLGLSDEEKVQIGARIEGHPDNIAPTILGGLVVGTEVDQHFDAIKAPLPPYTLVAYVPDYNLATKDARKVLPKELDFKTATHGSAIANTLVASLFTQNYKMAGELMESDVFHEPYREKLVPELNQIREVAHQKHAVATYLSGAGSTVMTWIEDEHVRGFLSGLNKHGLKANTFILHPDKNGVQIIE</sequence>
<feature type="chain" id="PRO_1000080123" description="Homoserine kinase">
    <location>
        <begin position="1"/>
        <end position="287"/>
    </location>
</feature>
<feature type="binding site" evidence="1">
    <location>
        <begin position="78"/>
        <end position="88"/>
    </location>
    <ligand>
        <name>ATP</name>
        <dbReference type="ChEBI" id="CHEBI:30616"/>
    </ligand>
</feature>
<protein>
    <recommendedName>
        <fullName evidence="1">Homoserine kinase</fullName>
        <shortName evidence="1">HK</shortName>
        <shortName evidence="1">HSK</shortName>
        <ecNumber evidence="1">2.7.1.39</ecNumber>
    </recommendedName>
</protein>
<proteinExistence type="inferred from homology"/>
<name>KHSE_LACAC</name>
<gene>
    <name evidence="1" type="primary">thrB</name>
    <name type="ordered locus">LBA1211</name>
</gene>
<accession>Q5FJS7</accession>
<keyword id="KW-0028">Amino-acid biosynthesis</keyword>
<keyword id="KW-0067">ATP-binding</keyword>
<keyword id="KW-0963">Cytoplasm</keyword>
<keyword id="KW-0418">Kinase</keyword>
<keyword id="KW-0547">Nucleotide-binding</keyword>
<keyword id="KW-1185">Reference proteome</keyword>
<keyword id="KW-0791">Threonine biosynthesis</keyword>
<keyword id="KW-0808">Transferase</keyword>
<organism>
    <name type="scientific">Lactobacillus acidophilus (strain ATCC 700396 / NCK56 / N2 / NCFM)</name>
    <dbReference type="NCBI Taxonomy" id="272621"/>
    <lineage>
        <taxon>Bacteria</taxon>
        <taxon>Bacillati</taxon>
        <taxon>Bacillota</taxon>
        <taxon>Bacilli</taxon>
        <taxon>Lactobacillales</taxon>
        <taxon>Lactobacillaceae</taxon>
        <taxon>Lactobacillus</taxon>
    </lineage>
</organism>
<comment type="function">
    <text evidence="1">Catalyzes the ATP-dependent phosphorylation of L-homoserine to L-homoserine phosphate.</text>
</comment>
<comment type="catalytic activity">
    <reaction evidence="1">
        <text>L-homoserine + ATP = O-phospho-L-homoserine + ADP + H(+)</text>
        <dbReference type="Rhea" id="RHEA:13985"/>
        <dbReference type="ChEBI" id="CHEBI:15378"/>
        <dbReference type="ChEBI" id="CHEBI:30616"/>
        <dbReference type="ChEBI" id="CHEBI:57476"/>
        <dbReference type="ChEBI" id="CHEBI:57590"/>
        <dbReference type="ChEBI" id="CHEBI:456216"/>
        <dbReference type="EC" id="2.7.1.39"/>
    </reaction>
</comment>
<comment type="pathway">
    <text evidence="1">Amino-acid biosynthesis; L-threonine biosynthesis; L-threonine from L-aspartate: step 4/5.</text>
</comment>
<comment type="subcellular location">
    <subcellularLocation>
        <location evidence="1">Cytoplasm</location>
    </subcellularLocation>
</comment>
<comment type="similarity">
    <text evidence="1">Belongs to the GHMP kinase family. Homoserine kinase subfamily.</text>
</comment>
<evidence type="ECO:0000255" key="1">
    <source>
        <dbReference type="HAMAP-Rule" id="MF_00384"/>
    </source>
</evidence>